<keyword id="KW-0256">Endoplasmic reticulum</keyword>
<keyword id="KW-0349">Heme</keyword>
<keyword id="KW-0408">Iron</keyword>
<keyword id="KW-0472">Membrane</keyword>
<keyword id="KW-0479">Metal-binding</keyword>
<keyword id="KW-0503">Monooxygenase</keyword>
<keyword id="KW-0560">Oxidoreductase</keyword>
<keyword id="KW-0812">Transmembrane</keyword>
<keyword id="KW-1133">Transmembrane helix</keyword>
<feature type="chain" id="PRO_0000430258" description="Protopine 6-monooxygenase">
    <location>
        <begin position="1"/>
        <end position="524"/>
    </location>
</feature>
<feature type="transmembrane region" description="Helical; Name=1" evidence="2">
    <location>
        <begin position="4"/>
        <end position="24"/>
    </location>
</feature>
<feature type="transmembrane region" description="Helical; Name=2" evidence="2">
    <location>
        <begin position="232"/>
        <end position="252"/>
    </location>
</feature>
<feature type="transmembrane region" description="Helical; Name=3" evidence="2">
    <location>
        <begin position="319"/>
        <end position="339"/>
    </location>
</feature>
<feature type="binding site" description="axial binding residue" evidence="1">
    <location>
        <position position="462"/>
    </location>
    <ligand>
        <name>heme</name>
        <dbReference type="ChEBI" id="CHEBI:30413"/>
    </ligand>
    <ligandPart>
        <name>Fe</name>
        <dbReference type="ChEBI" id="CHEBI:18248"/>
    </ligandPart>
</feature>
<organism>
    <name type="scientific">Eschscholzia californica</name>
    <name type="common">California poppy</name>
    <dbReference type="NCBI Taxonomy" id="3467"/>
    <lineage>
        <taxon>Eukaryota</taxon>
        <taxon>Viridiplantae</taxon>
        <taxon>Streptophyta</taxon>
        <taxon>Embryophyta</taxon>
        <taxon>Tracheophyta</taxon>
        <taxon>Spermatophyta</taxon>
        <taxon>Magnoliopsida</taxon>
        <taxon>Ranunculales</taxon>
        <taxon>Papaveraceae</taxon>
        <taxon>Papaveroideae</taxon>
        <taxon>Eschscholzia</taxon>
    </lineage>
</organism>
<accession>F2Z9C1</accession>
<protein>
    <recommendedName>
        <fullName>Protopine 6-monooxygenase</fullName>
        <ecNumber evidence="3">1.14.14.98</ecNumber>
    </recommendedName>
    <alternativeName>
        <fullName>Protopine 6-hydroxylase</fullName>
        <shortName>P6H</shortName>
    </alternativeName>
</protein>
<evidence type="ECO:0000250" key="1"/>
<evidence type="ECO:0000255" key="2"/>
<evidence type="ECO:0000269" key="3">
    <source>
    </source>
</evidence>
<evidence type="ECO:0000305" key="4"/>
<dbReference type="EC" id="1.14.14.98" evidence="3"/>
<dbReference type="EMBL" id="AB598834">
    <property type="protein sequence ID" value="BAK20464.1"/>
    <property type="molecule type" value="mRNA"/>
</dbReference>
<dbReference type="KEGG" id="ag:BAK20464"/>
<dbReference type="BioCyc" id="MetaCyc:MONOMER-12344"/>
<dbReference type="BRENDA" id="1.14.14.98">
    <property type="organism ID" value="2173"/>
</dbReference>
<dbReference type="SABIO-RK" id="F2Z9C1"/>
<dbReference type="GO" id="GO:0005789">
    <property type="term" value="C:endoplasmic reticulum membrane"/>
    <property type="evidence" value="ECO:0007669"/>
    <property type="project" value="UniProtKB-SubCell"/>
</dbReference>
<dbReference type="GO" id="GO:0020037">
    <property type="term" value="F:heme binding"/>
    <property type="evidence" value="ECO:0007669"/>
    <property type="project" value="InterPro"/>
</dbReference>
<dbReference type="GO" id="GO:0005506">
    <property type="term" value="F:iron ion binding"/>
    <property type="evidence" value="ECO:0007669"/>
    <property type="project" value="InterPro"/>
</dbReference>
<dbReference type="GO" id="GO:0047087">
    <property type="term" value="F:protopine 6-monooxygenase activity"/>
    <property type="evidence" value="ECO:0000314"/>
    <property type="project" value="UniProtKB"/>
</dbReference>
<dbReference type="GO" id="GO:0033075">
    <property type="term" value="P:isoquinoline alkaloid biosynthetic process"/>
    <property type="evidence" value="ECO:0000314"/>
    <property type="project" value="UniProtKB"/>
</dbReference>
<dbReference type="CDD" id="cd20654">
    <property type="entry name" value="CYP82"/>
    <property type="match status" value="1"/>
</dbReference>
<dbReference type="FunFam" id="1.10.630.10:FF:000026">
    <property type="entry name" value="Cytochrome P450 82C4"/>
    <property type="match status" value="1"/>
</dbReference>
<dbReference type="Gene3D" id="1.10.630.10">
    <property type="entry name" value="Cytochrome P450"/>
    <property type="match status" value="1"/>
</dbReference>
<dbReference type="InterPro" id="IPR001128">
    <property type="entry name" value="Cyt_P450"/>
</dbReference>
<dbReference type="InterPro" id="IPR017972">
    <property type="entry name" value="Cyt_P450_CS"/>
</dbReference>
<dbReference type="InterPro" id="IPR002401">
    <property type="entry name" value="Cyt_P450_E_grp-I"/>
</dbReference>
<dbReference type="InterPro" id="IPR036396">
    <property type="entry name" value="Cyt_P450_sf"/>
</dbReference>
<dbReference type="InterPro" id="IPR050651">
    <property type="entry name" value="Plant_Cytochrome_P450_Monoox"/>
</dbReference>
<dbReference type="PANTHER" id="PTHR47947:SF26">
    <property type="entry name" value="CYTOCHROME P450"/>
    <property type="match status" value="1"/>
</dbReference>
<dbReference type="PANTHER" id="PTHR47947">
    <property type="entry name" value="CYTOCHROME P450 82C3-RELATED"/>
    <property type="match status" value="1"/>
</dbReference>
<dbReference type="Pfam" id="PF00067">
    <property type="entry name" value="p450"/>
    <property type="match status" value="1"/>
</dbReference>
<dbReference type="PRINTS" id="PR00463">
    <property type="entry name" value="EP450I"/>
</dbReference>
<dbReference type="PRINTS" id="PR00385">
    <property type="entry name" value="P450"/>
</dbReference>
<dbReference type="SUPFAM" id="SSF48264">
    <property type="entry name" value="Cytochrome P450"/>
    <property type="match status" value="1"/>
</dbReference>
<dbReference type="PROSITE" id="PS00086">
    <property type="entry name" value="CYTOCHROME_P450"/>
    <property type="match status" value="1"/>
</dbReference>
<proteinExistence type="evidence at protein level"/>
<name>P6H_ESCCA</name>
<comment type="function">
    <text evidence="3">Catalyzes the conversion of protopine and allocryptopine to dihydrosanguinarine and dihydrochelerythrine, respectively, in the biosynthesis of isoquinoline alkaloid sanguinarine.</text>
</comment>
<comment type="catalytic activity">
    <reaction evidence="3">
        <text>protopine + reduced [NADPH--hemoprotein reductase] + O2 = 6-hydroxyprotopine + oxidized [NADPH--hemoprotein reductase] + H2O + H(+)</text>
        <dbReference type="Rhea" id="RHEA:22644"/>
        <dbReference type="Rhea" id="RHEA-COMP:11964"/>
        <dbReference type="Rhea" id="RHEA-COMP:11965"/>
        <dbReference type="ChEBI" id="CHEBI:15377"/>
        <dbReference type="ChEBI" id="CHEBI:15378"/>
        <dbReference type="ChEBI" id="CHEBI:15379"/>
        <dbReference type="ChEBI" id="CHEBI:16415"/>
        <dbReference type="ChEBI" id="CHEBI:17104"/>
        <dbReference type="ChEBI" id="CHEBI:57618"/>
        <dbReference type="ChEBI" id="CHEBI:58210"/>
        <dbReference type="EC" id="1.14.14.98"/>
    </reaction>
</comment>
<comment type="cofactor">
    <cofactor evidence="1">
        <name>heme</name>
        <dbReference type="ChEBI" id="CHEBI:30413"/>
    </cofactor>
</comment>
<comment type="biophysicochemical properties">
    <kinetics>
        <KM evidence="3">6.45 uM for protopine</KM>
        <KM evidence="3">8.7 uM for allocryptopine</KM>
    </kinetics>
</comment>
<comment type="pathway">
    <text evidence="3">Alkaloid biosynthesis.</text>
</comment>
<comment type="subcellular location">
    <subcellularLocation>
        <location evidence="4">Endoplasmic reticulum membrane</location>
        <topology evidence="4">Multi-pass membrane protein</topology>
    </subcellularLocation>
</comment>
<comment type="similarity">
    <text evidence="4">Belongs to the cytochrome P450 family.</text>
</comment>
<reference key="1">
    <citation type="journal article" date="2013" name="Phytochemistry">
        <title>Molecular cloning and characterization of a cytochrome P450 in sanguinarine biosynthesis from Eschscholzia californica cells.</title>
        <authorList>
            <person name="Takemura T."/>
            <person name="Ikezawa N."/>
            <person name="Iwasa K."/>
            <person name="Sato F."/>
        </authorList>
    </citation>
    <scope>NUCLEOTIDE SEQUENCE [MRNA]</scope>
    <scope>FUNCTION</scope>
    <scope>CATALYTIC ACTIVITY</scope>
    <scope>BIOPHYSICOCHEMICAL PROPERTIES</scope>
    <scope>PATHWAY</scope>
</reference>
<reference key="2">
    <citation type="journal article" date="2014" name="PLoS ONE">
        <title>Finding sequences for over 270 orphan enzymes.</title>
        <authorList>
            <person name="Shearer A.G."/>
            <person name="Altman T."/>
            <person name="Rhee C.D."/>
        </authorList>
    </citation>
    <scope>IDENTIFICATION</scope>
</reference>
<sequence>MDSLMLAYLFPISVASIIAFVFLYNLFSSRTLKNKKIRTAPMATGAWPVLGHLHLFGSGELPHKMLAAMADKYGSAFRMKFGKHTTLVVSDTRIVKECFTTNDTLFSNRPSTKAFQLMTYDNESVAFTPYGSYWREIRKISTLKLLSNHRLQAIKDVRASEVNVCFKTLYDQCKNPSGSAPILIDMKKWFEEVSNNVVMRVIVGRQNFGSKIVQGEEEAIHYKKVMDELLRLASLSMFSDFAPLLGFVDIFQGNLSAMKRNAKKVDAILENWLEEHRKKKNSVAESQQDFMDVMLSIVEESKLSGHDADAVIKATCLAMIMGGTDTTAVSLTWIISLLMNNRHALKKAREELDALVGKDRQVEDSDLKNLVYMNAIVKETMRMYPLGTLLERETKEDCEIDGFHVKGGTRLLVNVWKLQRDPNVWVDPTEFRPERFLTENADIDVGGQHFELLPFGAGRRVCPGVXFALQFMHLVLARLIHGYDLNTLNEENVDLTESPEGHVNHKASPLDLILTPRLHYKLYE</sequence>
<gene>
    <name type="primary">CYP82N2v2</name>
</gene>